<accession>Q6FLC9</accession>
<gene>
    <name type="primary">PNS1</name>
    <name type="ordered locus">CAGL0L04378g</name>
</gene>
<evidence type="ECO:0000250" key="1"/>
<evidence type="ECO:0000255" key="2"/>
<evidence type="ECO:0000256" key="3">
    <source>
        <dbReference type="SAM" id="MobiDB-lite"/>
    </source>
</evidence>
<evidence type="ECO:0000305" key="4"/>
<protein>
    <recommendedName>
        <fullName>Protein PNS1</fullName>
    </recommendedName>
</protein>
<keyword id="KW-1003">Cell membrane</keyword>
<keyword id="KW-0325">Glycoprotein</keyword>
<keyword id="KW-0472">Membrane</keyword>
<keyword id="KW-1185">Reference proteome</keyword>
<keyword id="KW-0812">Transmembrane</keyword>
<keyword id="KW-1133">Transmembrane helix</keyword>
<keyword id="KW-0813">Transport</keyword>
<name>PNS1_CANGA</name>
<organism>
    <name type="scientific">Candida glabrata (strain ATCC 2001 / BCRC 20586 / JCM 3761 / NBRC 0622 / NRRL Y-65 / CBS 138)</name>
    <name type="common">Yeast</name>
    <name type="synonym">Nakaseomyces glabratus</name>
    <dbReference type="NCBI Taxonomy" id="284593"/>
    <lineage>
        <taxon>Eukaryota</taxon>
        <taxon>Fungi</taxon>
        <taxon>Dikarya</taxon>
        <taxon>Ascomycota</taxon>
        <taxon>Saccharomycotina</taxon>
        <taxon>Saccharomycetes</taxon>
        <taxon>Saccharomycetales</taxon>
        <taxon>Saccharomycetaceae</taxon>
        <taxon>Nakaseomyces</taxon>
    </lineage>
</organism>
<feature type="chain" id="PRO_0000191732" description="Protein PNS1">
    <location>
        <begin position="1"/>
        <end position="557"/>
    </location>
</feature>
<feature type="topological domain" description="Cytoplasmic" evidence="2">
    <location>
        <begin position="1"/>
        <end position="99"/>
    </location>
</feature>
<feature type="transmembrane region" description="Helical" evidence="2">
    <location>
        <begin position="100"/>
        <end position="120"/>
    </location>
</feature>
<feature type="topological domain" description="Extracellular" evidence="2">
    <location>
        <begin position="121"/>
        <end position="147"/>
    </location>
</feature>
<feature type="transmembrane region" description="Helical" evidence="2">
    <location>
        <begin position="148"/>
        <end position="168"/>
    </location>
</feature>
<feature type="topological domain" description="Cytoplasmic" evidence="2">
    <location>
        <begin position="169"/>
        <end position="174"/>
    </location>
</feature>
<feature type="transmembrane region" description="Helical" evidence="2">
    <location>
        <begin position="175"/>
        <end position="195"/>
    </location>
</feature>
<feature type="topological domain" description="Extracellular" evidence="2">
    <location>
        <begin position="196"/>
        <end position="200"/>
    </location>
</feature>
<feature type="transmembrane region" description="Helical" evidence="2">
    <location>
        <begin position="201"/>
        <end position="221"/>
    </location>
</feature>
<feature type="topological domain" description="Cytoplasmic" evidence="2">
    <location>
        <begin position="222"/>
        <end position="246"/>
    </location>
</feature>
<feature type="transmembrane region" description="Helical" evidence="2">
    <location>
        <begin position="247"/>
        <end position="267"/>
    </location>
</feature>
<feature type="topological domain" description="Extracellular" evidence="2">
    <location>
        <begin position="268"/>
        <end position="292"/>
    </location>
</feature>
<feature type="transmembrane region" description="Helical" evidence="2">
    <location>
        <begin position="293"/>
        <end position="313"/>
    </location>
</feature>
<feature type="topological domain" description="Cytoplasmic" evidence="2">
    <location>
        <begin position="314"/>
        <end position="350"/>
    </location>
</feature>
<feature type="transmembrane region" description="Helical" evidence="2">
    <location>
        <begin position="351"/>
        <end position="371"/>
    </location>
</feature>
<feature type="topological domain" description="Extracellular" evidence="2">
    <location>
        <begin position="372"/>
        <end position="393"/>
    </location>
</feature>
<feature type="transmembrane region" description="Helical" evidence="2">
    <location>
        <begin position="394"/>
        <end position="414"/>
    </location>
</feature>
<feature type="topological domain" description="Cytoplasmic" evidence="2">
    <location>
        <begin position="415"/>
        <end position="454"/>
    </location>
</feature>
<feature type="transmembrane region" description="Helical" evidence="2">
    <location>
        <begin position="455"/>
        <end position="475"/>
    </location>
</feature>
<feature type="topological domain" description="Extracellular" evidence="2">
    <location>
        <begin position="476"/>
        <end position="488"/>
    </location>
</feature>
<feature type="transmembrane region" description="Helical" evidence="2">
    <location>
        <begin position="489"/>
        <end position="509"/>
    </location>
</feature>
<feature type="topological domain" description="Cytoplasmic" evidence="2">
    <location>
        <begin position="510"/>
        <end position="557"/>
    </location>
</feature>
<feature type="region of interest" description="Disordered" evidence="3">
    <location>
        <begin position="1"/>
        <end position="58"/>
    </location>
</feature>
<feature type="compositionally biased region" description="Polar residues" evidence="3">
    <location>
        <begin position="41"/>
        <end position="58"/>
    </location>
</feature>
<feature type="glycosylation site" description="N-linked (GlcNAc...) asparagine" evidence="2">
    <location>
        <position position="284"/>
    </location>
</feature>
<dbReference type="EMBL" id="CR380958">
    <property type="protein sequence ID" value="CAG61935.1"/>
    <property type="molecule type" value="Genomic_DNA"/>
</dbReference>
<dbReference type="RefSeq" id="XP_448965.1">
    <property type="nucleotide sequence ID" value="XM_448965.1"/>
</dbReference>
<dbReference type="SMR" id="Q6FLC9"/>
<dbReference type="FunCoup" id="Q6FLC9">
    <property type="interactions" value="259"/>
</dbReference>
<dbReference type="STRING" id="284593.Q6FLC9"/>
<dbReference type="GlyCosmos" id="Q6FLC9">
    <property type="glycosylation" value="1 site, No reported glycans"/>
</dbReference>
<dbReference type="EnsemblFungi" id="CAGL0L04378g-T">
    <property type="protein sequence ID" value="CAGL0L04378g-T-p1"/>
    <property type="gene ID" value="CAGL0L04378g"/>
</dbReference>
<dbReference type="KEGG" id="cgr:2890635"/>
<dbReference type="CGD" id="CAL0135642">
    <property type="gene designation" value="CAGL0L04378g"/>
</dbReference>
<dbReference type="VEuPathDB" id="FungiDB:CAGL0L04378g"/>
<dbReference type="eggNOG" id="KOG1362">
    <property type="taxonomic scope" value="Eukaryota"/>
</dbReference>
<dbReference type="HOGENOM" id="CLU_026724_0_0_1"/>
<dbReference type="InParanoid" id="Q6FLC9"/>
<dbReference type="OMA" id="DTIFVAM"/>
<dbReference type="Proteomes" id="UP000002428">
    <property type="component" value="Chromosome L"/>
</dbReference>
<dbReference type="GO" id="GO:0005886">
    <property type="term" value="C:plasma membrane"/>
    <property type="evidence" value="ECO:0007669"/>
    <property type="project" value="UniProtKB-SubCell"/>
</dbReference>
<dbReference type="GO" id="GO:0022857">
    <property type="term" value="F:transmembrane transporter activity"/>
    <property type="evidence" value="ECO:0007669"/>
    <property type="project" value="InterPro"/>
</dbReference>
<dbReference type="InterPro" id="IPR007603">
    <property type="entry name" value="Choline_transptr-like"/>
</dbReference>
<dbReference type="PANTHER" id="PTHR12385">
    <property type="entry name" value="CHOLINE TRANSPORTER-LIKE (SLC FAMILY 44)"/>
    <property type="match status" value="1"/>
</dbReference>
<dbReference type="PANTHER" id="PTHR12385:SF4">
    <property type="entry name" value="PROTEIN PNS1"/>
    <property type="match status" value="1"/>
</dbReference>
<dbReference type="Pfam" id="PF04515">
    <property type="entry name" value="Choline_transpo"/>
    <property type="match status" value="1"/>
</dbReference>
<comment type="function">
    <text evidence="1">Probably involved in transport through the plasma membrane.</text>
</comment>
<comment type="subcellular location">
    <subcellularLocation>
        <location evidence="1">Cell membrane</location>
        <topology evidence="1">Multi-pass membrane protein</topology>
    </subcellularLocation>
</comment>
<comment type="similarity">
    <text evidence="4">Belongs to the CTL (choline transporter-like) family.</text>
</comment>
<reference key="1">
    <citation type="journal article" date="2004" name="Nature">
        <title>Genome evolution in yeasts.</title>
        <authorList>
            <person name="Dujon B."/>
            <person name="Sherman D."/>
            <person name="Fischer G."/>
            <person name="Durrens P."/>
            <person name="Casaregola S."/>
            <person name="Lafontaine I."/>
            <person name="de Montigny J."/>
            <person name="Marck C."/>
            <person name="Neuveglise C."/>
            <person name="Talla E."/>
            <person name="Goffard N."/>
            <person name="Frangeul L."/>
            <person name="Aigle M."/>
            <person name="Anthouard V."/>
            <person name="Babour A."/>
            <person name="Barbe V."/>
            <person name="Barnay S."/>
            <person name="Blanchin S."/>
            <person name="Beckerich J.-M."/>
            <person name="Beyne E."/>
            <person name="Bleykasten C."/>
            <person name="Boisrame A."/>
            <person name="Boyer J."/>
            <person name="Cattolico L."/>
            <person name="Confanioleri F."/>
            <person name="de Daruvar A."/>
            <person name="Despons L."/>
            <person name="Fabre E."/>
            <person name="Fairhead C."/>
            <person name="Ferry-Dumazet H."/>
            <person name="Groppi A."/>
            <person name="Hantraye F."/>
            <person name="Hennequin C."/>
            <person name="Jauniaux N."/>
            <person name="Joyet P."/>
            <person name="Kachouri R."/>
            <person name="Kerrest A."/>
            <person name="Koszul R."/>
            <person name="Lemaire M."/>
            <person name="Lesur I."/>
            <person name="Ma L."/>
            <person name="Muller H."/>
            <person name="Nicaud J.-M."/>
            <person name="Nikolski M."/>
            <person name="Oztas S."/>
            <person name="Ozier-Kalogeropoulos O."/>
            <person name="Pellenz S."/>
            <person name="Potier S."/>
            <person name="Richard G.-F."/>
            <person name="Straub M.-L."/>
            <person name="Suleau A."/>
            <person name="Swennen D."/>
            <person name="Tekaia F."/>
            <person name="Wesolowski-Louvel M."/>
            <person name="Westhof E."/>
            <person name="Wirth B."/>
            <person name="Zeniou-Meyer M."/>
            <person name="Zivanovic Y."/>
            <person name="Bolotin-Fukuhara M."/>
            <person name="Thierry A."/>
            <person name="Bouchier C."/>
            <person name="Caudron B."/>
            <person name="Scarpelli C."/>
            <person name="Gaillardin C."/>
            <person name="Weissenbach J."/>
            <person name="Wincker P."/>
            <person name="Souciet J.-L."/>
        </authorList>
    </citation>
    <scope>NUCLEOTIDE SEQUENCE [LARGE SCALE GENOMIC DNA]</scope>
    <source>
        <strain>ATCC 2001 / BCRC 20586 / JCM 3761 / NBRC 0622 / NRRL Y-65 / CBS 138</strain>
    </source>
</reference>
<sequence>MSTEKQYQPQQPPPAYTGQGPDNGNAYGYPESYGKTETHSGDSCSGDTSMNPQQQGQQYQFRKDDEFYNLNHEGAGAPIGSYAEVFPTEDNNKPKFNDWPFIIVFLLTLCGFIVVASLTLRAWSQTYSSTGSGIYHDFDTGTLNTNSVILLVFSVVIAIFFAFIGIVLCRAYPKFFIYAGMIVNILAALGTAIMYMSLKYWSAGIVFLIFTFMTAWCYWGMRSRIPLTVAILRVIVLAMKNCPQSLFVSFFGTIVASAFAMLFSTVVVATYMKYDPSNTNSGCNVSGGDCSHAKLIGVLVVVFFCGYYISEVIRNVMHCTVSGVFGSWYYRYKSDQGMPKWPAMGAFKRAMTYSFGSICFGSLIVSIIETFRQLLQLGKQAAIASTDNANWIRIIFWLIDMLVGFIQWIAQYFNHYAYCIIALYGKPYLKAAKQTWYMFREKGIDALINDNLVNVALGFYSLFASYMSCLFAFLYLRFTKPGYNSDGDFNAPLMAFAFVIALQLTNIANETIRSGCATFFTALGHDPEVFQAQYPDRFDEIFRSYPQVLNKLTHQDV</sequence>
<proteinExistence type="inferred from homology"/>